<feature type="chain" id="PRO_1000165459" description="Small ribosomal subunit protein uS5">
    <location>
        <begin position="1"/>
        <end position="248"/>
    </location>
</feature>
<feature type="domain" description="S5 DRBM" evidence="1">
    <location>
        <begin position="94"/>
        <end position="157"/>
    </location>
</feature>
<feature type="region of interest" description="Disordered" evidence="2">
    <location>
        <begin position="1"/>
        <end position="87"/>
    </location>
</feature>
<feature type="compositionally biased region" description="Low complexity" evidence="2">
    <location>
        <begin position="8"/>
        <end position="23"/>
    </location>
</feature>
<feature type="compositionally biased region" description="Basic and acidic residues" evidence="2">
    <location>
        <begin position="57"/>
        <end position="87"/>
    </location>
</feature>
<name>RS5_MYCS5</name>
<gene>
    <name evidence="1" type="primary">rpsE</name>
    <name type="ordered locus">MS53_0626</name>
</gene>
<comment type="function">
    <text evidence="1">With S4 and S12 plays an important role in translational accuracy.</text>
</comment>
<comment type="function">
    <text evidence="1">Located at the back of the 30S subunit body where it stabilizes the conformation of the head with respect to the body.</text>
</comment>
<comment type="subunit">
    <text evidence="1">Part of the 30S ribosomal subunit. Contacts proteins S4 and S8.</text>
</comment>
<comment type="domain">
    <text>The N-terminal domain interacts with the head of the 30S subunit; the C-terminal domain interacts with the body and contacts protein S4. The interaction surface between S4 and S5 is involved in control of translational fidelity.</text>
</comment>
<comment type="similarity">
    <text evidence="1">Belongs to the universal ribosomal protein uS5 family.</text>
</comment>
<proteinExistence type="inferred from homology"/>
<protein>
    <recommendedName>
        <fullName evidence="1">Small ribosomal subunit protein uS5</fullName>
    </recommendedName>
    <alternativeName>
        <fullName evidence="3">30S ribosomal protein S5</fullName>
    </alternativeName>
</protein>
<evidence type="ECO:0000255" key="1">
    <source>
        <dbReference type="HAMAP-Rule" id="MF_01307"/>
    </source>
</evidence>
<evidence type="ECO:0000256" key="2">
    <source>
        <dbReference type="SAM" id="MobiDB-lite"/>
    </source>
</evidence>
<evidence type="ECO:0000305" key="3"/>
<keyword id="KW-1185">Reference proteome</keyword>
<keyword id="KW-0687">Ribonucleoprotein</keyword>
<keyword id="KW-0689">Ribosomal protein</keyword>
<keyword id="KW-0694">RNA-binding</keyword>
<keyword id="KW-0699">rRNA-binding</keyword>
<reference key="1">
    <citation type="journal article" date="2005" name="J. Bacteriol.">
        <title>Swine and poultry pathogens: the complete genome sequences of two strains of Mycoplasma hyopneumoniae and a strain of Mycoplasma synoviae.</title>
        <authorList>
            <person name="Vasconcelos A.T.R."/>
            <person name="Ferreira H.B."/>
            <person name="Bizarro C.V."/>
            <person name="Bonatto S.L."/>
            <person name="Carvalho M.O."/>
            <person name="Pinto P.M."/>
            <person name="Almeida D.F."/>
            <person name="Almeida L.G.P."/>
            <person name="Almeida R."/>
            <person name="Alves-Junior L."/>
            <person name="Assuncao E.N."/>
            <person name="Azevedo V.A.C."/>
            <person name="Bogo M.R."/>
            <person name="Brigido M.M."/>
            <person name="Brocchi M."/>
            <person name="Burity H.A."/>
            <person name="Camargo A.A."/>
            <person name="Camargo S.S."/>
            <person name="Carepo M.S."/>
            <person name="Carraro D.M."/>
            <person name="de Mattos Cascardo J.C."/>
            <person name="Castro L.A."/>
            <person name="Cavalcanti G."/>
            <person name="Chemale G."/>
            <person name="Collevatti R.G."/>
            <person name="Cunha C.W."/>
            <person name="Dallagiovanna B."/>
            <person name="Dambros B.P."/>
            <person name="Dellagostin O.A."/>
            <person name="Falcao C."/>
            <person name="Fantinatti-Garboggini F."/>
            <person name="Felipe M.S.S."/>
            <person name="Fiorentin L."/>
            <person name="Franco G.R."/>
            <person name="Freitas N.S.A."/>
            <person name="Frias D."/>
            <person name="Grangeiro T.B."/>
            <person name="Grisard E.C."/>
            <person name="Guimaraes C.T."/>
            <person name="Hungria M."/>
            <person name="Jardim S.N."/>
            <person name="Krieger M.A."/>
            <person name="Laurino J.P."/>
            <person name="Lima L.F.A."/>
            <person name="Lopes M.I."/>
            <person name="Loreto E.L.S."/>
            <person name="Madeira H.M.F."/>
            <person name="Manfio G.P."/>
            <person name="Maranhao A.Q."/>
            <person name="Martinkovics C.T."/>
            <person name="Medeiros S.R.B."/>
            <person name="Moreira M.A.M."/>
            <person name="Neiva M."/>
            <person name="Ramalho-Neto C.E."/>
            <person name="Nicolas M.F."/>
            <person name="Oliveira S.C."/>
            <person name="Paixao R.F.C."/>
            <person name="Pedrosa F.O."/>
            <person name="Pena S.D.J."/>
            <person name="Pereira M."/>
            <person name="Pereira-Ferrari L."/>
            <person name="Piffer I."/>
            <person name="Pinto L.S."/>
            <person name="Potrich D.P."/>
            <person name="Salim A.C.M."/>
            <person name="Santos F.R."/>
            <person name="Schmitt R."/>
            <person name="Schneider M.P.C."/>
            <person name="Schrank A."/>
            <person name="Schrank I.S."/>
            <person name="Schuck A.F."/>
            <person name="Seuanez H.N."/>
            <person name="Silva D.W."/>
            <person name="Silva R."/>
            <person name="Silva S.C."/>
            <person name="Soares C.M.A."/>
            <person name="Souza K.R.L."/>
            <person name="Souza R.C."/>
            <person name="Staats C.C."/>
            <person name="Steffens M.B.R."/>
            <person name="Teixeira S.M.R."/>
            <person name="Urmenyi T.P."/>
            <person name="Vainstein M.H."/>
            <person name="Zuccherato L.W."/>
            <person name="Simpson A.J.G."/>
            <person name="Zaha A."/>
        </authorList>
    </citation>
    <scope>NUCLEOTIDE SEQUENCE [LARGE SCALE GENOMIC DNA]</scope>
    <source>
        <strain>53</strain>
    </source>
</reference>
<accession>Q4A5D8</accession>
<organism>
    <name type="scientific">Mycoplasmopsis synoviae (strain 53)</name>
    <name type="common">Mycoplasma synoviae</name>
    <dbReference type="NCBI Taxonomy" id="262723"/>
    <lineage>
        <taxon>Bacteria</taxon>
        <taxon>Bacillati</taxon>
        <taxon>Mycoplasmatota</taxon>
        <taxon>Mycoplasmoidales</taxon>
        <taxon>Metamycoplasmataceae</taxon>
        <taxon>Mycoplasmopsis</taxon>
    </lineage>
</organism>
<dbReference type="EMBL" id="AE017245">
    <property type="protein sequence ID" value="AAZ44033.2"/>
    <property type="molecule type" value="Genomic_DNA"/>
</dbReference>
<dbReference type="RefSeq" id="WP_041352126.1">
    <property type="nucleotide sequence ID" value="NC_007294.1"/>
</dbReference>
<dbReference type="SMR" id="Q4A5D8"/>
<dbReference type="STRING" id="262723.MS53_0626"/>
<dbReference type="KEGG" id="msy:MS53_0626"/>
<dbReference type="eggNOG" id="COG0098">
    <property type="taxonomic scope" value="Bacteria"/>
</dbReference>
<dbReference type="HOGENOM" id="CLU_065898_2_1_14"/>
<dbReference type="OrthoDB" id="9809045at2"/>
<dbReference type="Proteomes" id="UP000000549">
    <property type="component" value="Chromosome"/>
</dbReference>
<dbReference type="GO" id="GO:0015935">
    <property type="term" value="C:small ribosomal subunit"/>
    <property type="evidence" value="ECO:0007669"/>
    <property type="project" value="InterPro"/>
</dbReference>
<dbReference type="GO" id="GO:0019843">
    <property type="term" value="F:rRNA binding"/>
    <property type="evidence" value="ECO:0007669"/>
    <property type="project" value="UniProtKB-UniRule"/>
</dbReference>
<dbReference type="GO" id="GO:0003735">
    <property type="term" value="F:structural constituent of ribosome"/>
    <property type="evidence" value="ECO:0007669"/>
    <property type="project" value="InterPro"/>
</dbReference>
<dbReference type="GO" id="GO:0006412">
    <property type="term" value="P:translation"/>
    <property type="evidence" value="ECO:0007669"/>
    <property type="project" value="UniProtKB-UniRule"/>
</dbReference>
<dbReference type="FunFam" id="3.30.160.20:FF:000001">
    <property type="entry name" value="30S ribosomal protein S5"/>
    <property type="match status" value="1"/>
</dbReference>
<dbReference type="FunFam" id="3.30.230.10:FF:000002">
    <property type="entry name" value="30S ribosomal protein S5"/>
    <property type="match status" value="1"/>
</dbReference>
<dbReference type="Gene3D" id="3.30.160.20">
    <property type="match status" value="1"/>
</dbReference>
<dbReference type="Gene3D" id="3.30.230.10">
    <property type="match status" value="1"/>
</dbReference>
<dbReference type="HAMAP" id="MF_01307_B">
    <property type="entry name" value="Ribosomal_uS5_B"/>
    <property type="match status" value="1"/>
</dbReference>
<dbReference type="InterPro" id="IPR020568">
    <property type="entry name" value="Ribosomal_Su5_D2-typ_SF"/>
</dbReference>
<dbReference type="InterPro" id="IPR000851">
    <property type="entry name" value="Ribosomal_uS5"/>
</dbReference>
<dbReference type="InterPro" id="IPR005712">
    <property type="entry name" value="Ribosomal_uS5_bac-type"/>
</dbReference>
<dbReference type="InterPro" id="IPR005324">
    <property type="entry name" value="Ribosomal_uS5_C"/>
</dbReference>
<dbReference type="InterPro" id="IPR013810">
    <property type="entry name" value="Ribosomal_uS5_N"/>
</dbReference>
<dbReference type="InterPro" id="IPR018192">
    <property type="entry name" value="Ribosomal_uS5_N_CS"/>
</dbReference>
<dbReference type="InterPro" id="IPR014721">
    <property type="entry name" value="Ribsml_uS5_D2-typ_fold_subgr"/>
</dbReference>
<dbReference type="NCBIfam" id="TIGR01021">
    <property type="entry name" value="rpsE_bact"/>
    <property type="match status" value="1"/>
</dbReference>
<dbReference type="PANTHER" id="PTHR48277">
    <property type="entry name" value="MITOCHONDRIAL RIBOSOMAL PROTEIN S5"/>
    <property type="match status" value="1"/>
</dbReference>
<dbReference type="PANTHER" id="PTHR48277:SF1">
    <property type="entry name" value="MITOCHONDRIAL RIBOSOMAL PROTEIN S5"/>
    <property type="match status" value="1"/>
</dbReference>
<dbReference type="Pfam" id="PF00333">
    <property type="entry name" value="Ribosomal_S5"/>
    <property type="match status" value="1"/>
</dbReference>
<dbReference type="Pfam" id="PF03719">
    <property type="entry name" value="Ribosomal_S5_C"/>
    <property type="match status" value="1"/>
</dbReference>
<dbReference type="SUPFAM" id="SSF54768">
    <property type="entry name" value="dsRNA-binding domain-like"/>
    <property type="match status" value="1"/>
</dbReference>
<dbReference type="SUPFAM" id="SSF54211">
    <property type="entry name" value="Ribosomal protein S5 domain 2-like"/>
    <property type="match status" value="1"/>
</dbReference>
<dbReference type="PROSITE" id="PS00585">
    <property type="entry name" value="RIBOSOMAL_S5"/>
    <property type="match status" value="1"/>
</dbReference>
<dbReference type="PROSITE" id="PS50881">
    <property type="entry name" value="S5_DSRBD"/>
    <property type="match status" value="1"/>
</dbReference>
<sequence length="248" mass="26831">MEDKKLSSAKPATSSKPAPKAPSTGTKVVTKPASGPRPAFKPGQRKPHASNASNDKVAFEKRNFTSGDKTKKPTDSKNPRFQRNNKDRKFVSEYEEKIVDIARVTKVVKGGRRFSFSAFVVIGNKKGTVGYGHGKANEVPDAIKKAIKDAHNNLVEVPITKGTVPHEVTAKFLASKVLLKSAPKGKGLIASSRVRAVVELAGYTDIVSKTYGSRSAQNVVKSVVKALLNLRTAKQIAEVRDKDVKDLL</sequence>